<name>PNDC1_PONAB</name>
<evidence type="ECO:0000250" key="1">
    <source>
        <dbReference type="UniProtKB" id="B2RXZ1"/>
    </source>
</evidence>
<evidence type="ECO:0000250" key="2">
    <source>
        <dbReference type="UniProtKB" id="O95453"/>
    </source>
</evidence>
<evidence type="ECO:0000250" key="3">
    <source>
        <dbReference type="UniProtKB" id="Q8NA58"/>
    </source>
</evidence>
<evidence type="ECO:0000255" key="4"/>
<evidence type="ECO:0000305" key="5"/>
<accession>Q5R6R6</accession>
<feature type="chain" id="PRO_0000311366" description="Poly(A)-specific ribonuclease PNLDC1">
    <location>
        <begin position="1"/>
        <end position="520"/>
    </location>
</feature>
<feature type="transmembrane region" description="Helical" evidence="4">
    <location>
        <begin position="497"/>
        <end position="513"/>
    </location>
</feature>
<feature type="binding site" evidence="2">
    <location>
        <position position="17"/>
    </location>
    <ligand>
        <name>Mg(2+)</name>
        <dbReference type="ChEBI" id="CHEBI:18420"/>
        <note>catalytic</note>
    </ligand>
</feature>
<feature type="binding site" evidence="2">
    <location>
        <position position="19"/>
    </location>
    <ligand>
        <name>Mg(2+)</name>
        <dbReference type="ChEBI" id="CHEBI:18420"/>
        <note>catalytic</note>
    </ligand>
</feature>
<feature type="binding site" evidence="2">
    <location>
        <position position="260"/>
    </location>
    <ligand>
        <name>Mg(2+)</name>
        <dbReference type="ChEBI" id="CHEBI:18420"/>
        <note>catalytic</note>
    </ligand>
</feature>
<feature type="binding site" evidence="2">
    <location>
        <position position="354"/>
    </location>
    <ligand>
        <name>Mg(2+)</name>
        <dbReference type="ChEBI" id="CHEBI:18420"/>
        <note>catalytic</note>
    </ligand>
</feature>
<organism>
    <name type="scientific">Pongo abelii</name>
    <name type="common">Sumatran orangutan</name>
    <name type="synonym">Pongo pygmaeus abelii</name>
    <dbReference type="NCBI Taxonomy" id="9601"/>
    <lineage>
        <taxon>Eukaryota</taxon>
        <taxon>Metazoa</taxon>
        <taxon>Chordata</taxon>
        <taxon>Craniata</taxon>
        <taxon>Vertebrata</taxon>
        <taxon>Euteleostomi</taxon>
        <taxon>Mammalia</taxon>
        <taxon>Eutheria</taxon>
        <taxon>Euarchontoglires</taxon>
        <taxon>Primates</taxon>
        <taxon>Haplorrhini</taxon>
        <taxon>Catarrhini</taxon>
        <taxon>Hominidae</taxon>
        <taxon>Pongo</taxon>
    </lineage>
</organism>
<keyword id="KW-0256">Endoplasmic reticulum</keyword>
<keyword id="KW-0269">Exonuclease</keyword>
<keyword id="KW-0378">Hydrolase</keyword>
<keyword id="KW-0460">Magnesium</keyword>
<keyword id="KW-0472">Membrane</keyword>
<keyword id="KW-0479">Metal-binding</keyword>
<keyword id="KW-0866">Nonsense-mediated mRNA decay</keyword>
<keyword id="KW-0540">Nuclease</keyword>
<keyword id="KW-1185">Reference proteome</keyword>
<keyword id="KW-0694">RNA-binding</keyword>
<keyword id="KW-0812">Transmembrane</keyword>
<keyword id="KW-1133">Transmembrane helix</keyword>
<protein>
    <recommendedName>
        <fullName evidence="3">Poly(A)-specific ribonuclease PNLDC1</fullName>
        <ecNumber evidence="1 3">3.1.13.4</ecNumber>
    </recommendedName>
    <alternativeName>
        <fullName evidence="3">PARN-like domain-containing protein 1</fullName>
    </alternativeName>
    <alternativeName>
        <fullName evidence="3">Poly(A)-specific ribonuclease domain-containing protein 1</fullName>
    </alternativeName>
</protein>
<comment type="function">
    <text evidence="1 3">3'-exoribonuclease that has a preference for poly(A) tails of mRNAs, thereby efficiently degrading poly(A) tails. Exonucleolytic degradation of the poly(A) tail is often the first step in the decay of eukaryotic mRNAs and is also used to silence certain maternal mRNAs translationally during oocyte maturation and early embryonic development (By similarity). May act as a regulator of multipotency in embryonic stem cells (By similarity). Is a critical factor for proper spermatogenesis, involved in pre-piRNAs processing to generate mature piRNAs (By similarity).</text>
</comment>
<comment type="catalytic activity">
    <reaction evidence="3">
        <text>Exonucleolytic cleavage of poly(A) to 5'-AMP.</text>
        <dbReference type="EC" id="3.1.13.4"/>
    </reaction>
</comment>
<comment type="cofactor">
    <cofactor evidence="3">
        <name>Mg(2+)</name>
        <dbReference type="ChEBI" id="CHEBI:18420"/>
    </cofactor>
</comment>
<comment type="subcellular location">
    <subcellularLocation>
        <location evidence="3">Endoplasmic reticulum membrane</location>
        <topology evidence="3">Single-pass membrane protein</topology>
    </subcellularLocation>
    <text evidence="3">Localizes mainly in the endoplasmic reticulum.</text>
</comment>
<comment type="similarity">
    <text evidence="5">Belongs to the CAF1 family.</text>
</comment>
<reference key="1">
    <citation type="submission" date="2004-11" db="EMBL/GenBank/DDBJ databases">
        <authorList>
            <consortium name="The German cDNA consortium"/>
        </authorList>
    </citation>
    <scope>NUCLEOTIDE SEQUENCE [LARGE SCALE MRNA]</scope>
    <source>
        <tissue>Brain cortex</tissue>
    </source>
</reference>
<proteinExistence type="evidence at transcript level"/>
<dbReference type="EC" id="3.1.13.4" evidence="1 3"/>
<dbReference type="EMBL" id="CR860419">
    <property type="protein sequence ID" value="CAH92544.1"/>
    <property type="molecule type" value="mRNA"/>
</dbReference>
<dbReference type="RefSeq" id="NP_001126488.1">
    <property type="nucleotide sequence ID" value="NM_001133016.2"/>
</dbReference>
<dbReference type="SMR" id="Q5R6R6"/>
<dbReference type="FunCoup" id="Q5R6R6">
    <property type="interactions" value="125"/>
</dbReference>
<dbReference type="STRING" id="9601.ENSPPYP00000019204"/>
<dbReference type="GeneID" id="100173475"/>
<dbReference type="KEGG" id="pon:100173475"/>
<dbReference type="CTD" id="154197"/>
<dbReference type="eggNOG" id="KOG1990">
    <property type="taxonomic scope" value="Eukaryota"/>
</dbReference>
<dbReference type="InParanoid" id="Q5R6R6"/>
<dbReference type="OrthoDB" id="414075at2759"/>
<dbReference type="Proteomes" id="UP000001595">
    <property type="component" value="Unplaced"/>
</dbReference>
<dbReference type="GO" id="GO:0005783">
    <property type="term" value="C:endoplasmic reticulum"/>
    <property type="evidence" value="ECO:0000250"/>
    <property type="project" value="UniProtKB"/>
</dbReference>
<dbReference type="GO" id="GO:0005789">
    <property type="term" value="C:endoplasmic reticulum membrane"/>
    <property type="evidence" value="ECO:0007669"/>
    <property type="project" value="UniProtKB-SubCell"/>
</dbReference>
<dbReference type="GO" id="GO:0005634">
    <property type="term" value="C:nucleus"/>
    <property type="evidence" value="ECO:0007669"/>
    <property type="project" value="TreeGrafter"/>
</dbReference>
<dbReference type="GO" id="GO:0046872">
    <property type="term" value="F:metal ion binding"/>
    <property type="evidence" value="ECO:0007669"/>
    <property type="project" value="UniProtKB-KW"/>
</dbReference>
<dbReference type="GO" id="GO:0004535">
    <property type="term" value="F:poly(A)-specific ribonuclease activity"/>
    <property type="evidence" value="ECO:0000250"/>
    <property type="project" value="UniProtKB"/>
</dbReference>
<dbReference type="GO" id="GO:0003723">
    <property type="term" value="F:RNA binding"/>
    <property type="evidence" value="ECO:0007669"/>
    <property type="project" value="UniProtKB-KW"/>
</dbReference>
<dbReference type="GO" id="GO:0000184">
    <property type="term" value="P:nuclear-transcribed mRNA catabolic process, nonsense-mediated decay"/>
    <property type="evidence" value="ECO:0007669"/>
    <property type="project" value="UniProtKB-KW"/>
</dbReference>
<dbReference type="GO" id="GO:0000289">
    <property type="term" value="P:nuclear-transcribed mRNA poly(A) tail shortening"/>
    <property type="evidence" value="ECO:0000250"/>
    <property type="project" value="UniProtKB"/>
</dbReference>
<dbReference type="GO" id="GO:1990431">
    <property type="term" value="P:priRNA 3'-end processing"/>
    <property type="evidence" value="ECO:0007669"/>
    <property type="project" value="TreeGrafter"/>
</dbReference>
<dbReference type="GO" id="GO:1990432">
    <property type="term" value="P:siRNA 3'-end processing"/>
    <property type="evidence" value="ECO:0007669"/>
    <property type="project" value="TreeGrafter"/>
</dbReference>
<dbReference type="FunFam" id="3.30.420.10:FF:000058">
    <property type="entry name" value="PARN like, ribonuclease domain containing 1"/>
    <property type="match status" value="1"/>
</dbReference>
<dbReference type="FunFam" id="3.30.420.10:FF:000061">
    <property type="entry name" value="PARN like, ribonuclease domain containing 1"/>
    <property type="match status" value="1"/>
</dbReference>
<dbReference type="Gene3D" id="3.30.420.10">
    <property type="entry name" value="Ribonuclease H-like superfamily/Ribonuclease H"/>
    <property type="match status" value="2"/>
</dbReference>
<dbReference type="InterPro" id="IPR051181">
    <property type="entry name" value="CAF1_poly(A)_ribonucleases"/>
</dbReference>
<dbReference type="InterPro" id="IPR006941">
    <property type="entry name" value="RNase_CAF1"/>
</dbReference>
<dbReference type="InterPro" id="IPR012337">
    <property type="entry name" value="RNaseH-like_sf"/>
</dbReference>
<dbReference type="InterPro" id="IPR036397">
    <property type="entry name" value="RNaseH_sf"/>
</dbReference>
<dbReference type="PANTHER" id="PTHR15092">
    <property type="entry name" value="POLY A -SPECIFIC RIBONUCLEASE/TARGET OF EGR1, MEMBER 1"/>
    <property type="match status" value="1"/>
</dbReference>
<dbReference type="PANTHER" id="PTHR15092:SF22">
    <property type="entry name" value="POLY(A)-SPECIFIC RIBONUCLEASE PNLDC1"/>
    <property type="match status" value="1"/>
</dbReference>
<dbReference type="Pfam" id="PF04857">
    <property type="entry name" value="CAF1"/>
    <property type="match status" value="1"/>
</dbReference>
<dbReference type="SUPFAM" id="SSF53098">
    <property type="entry name" value="Ribonuclease H-like"/>
    <property type="match status" value="1"/>
</dbReference>
<sequence>MFCTRGLVFFAFPAGLDIEFTGLRSNLSGPQQISLFDLPSEWYLKTRQSVQQFTICQIGLSVFSAIEGEANKYTAHSCNFYLFPTTFGILDSEFSFQASSVQFLNQYGFNYNKFLKNGIPYMNEEQEKKIRHDILTGNWRVRSSPDKDQIKVVIDEVTRWLDLAKEGDWMTLPGITGFQAFEVQLVLRQALPNIWTVLKDEGVVVKKVSKQHRWYLQNTSCDRESCWKENILLSARGFSAFFQMLVKAQKPLVGHNMMMDLLHLHEKFFRPLPESYDQFKQNIHSLFPVLIDTKSVTKDIWKEMNFPRVSNLSKVYEVLNSDLNPTKNSGPEIVHASRCEKYVETKCPHEAAYDAFLCGSVLLKVAHLLLQKVHRIDPVPESSFPQYLDVLAPYVNQVNLIRAGVPKINFSGPDYPGIRPPILILSVKRWPGVSEQQVCHKFQNLCKFDVRRLTRSQFLLLTNKFKDARNILKEYRGHPTLCISLYRYWRHSPNVNCLLQVCGIVTAWALLAFTLGRSGP</sequence>
<gene>
    <name evidence="3" type="primary">PNLDC1</name>
</gene>